<comment type="function">
    <text evidence="1">Catalyzes the condensation reaction of fatty acid synthesis by the addition to an acyl acceptor of two carbons from malonyl-ACP. Catalyzes the first condensation reaction which initiates fatty acid synthesis and may therefore play a role in governing the total rate of fatty acid production. Possesses both acetoacetyl-ACP synthase and acetyl transacylase activities. Its substrate specificity determines the biosynthesis of branched-chain and/or straight-chain of fatty acids.</text>
</comment>
<comment type="catalytic activity">
    <reaction evidence="1">
        <text>malonyl-[ACP] + acetyl-CoA + H(+) = 3-oxobutanoyl-[ACP] + CO2 + CoA</text>
        <dbReference type="Rhea" id="RHEA:12080"/>
        <dbReference type="Rhea" id="RHEA-COMP:9623"/>
        <dbReference type="Rhea" id="RHEA-COMP:9625"/>
        <dbReference type="ChEBI" id="CHEBI:15378"/>
        <dbReference type="ChEBI" id="CHEBI:16526"/>
        <dbReference type="ChEBI" id="CHEBI:57287"/>
        <dbReference type="ChEBI" id="CHEBI:57288"/>
        <dbReference type="ChEBI" id="CHEBI:78449"/>
        <dbReference type="ChEBI" id="CHEBI:78450"/>
        <dbReference type="EC" id="2.3.1.180"/>
    </reaction>
</comment>
<comment type="pathway">
    <text evidence="1">Lipid metabolism; fatty acid biosynthesis.</text>
</comment>
<comment type="subunit">
    <text evidence="1">Homodimer.</text>
</comment>
<comment type="subcellular location">
    <subcellularLocation>
        <location evidence="1">Cytoplasm</location>
    </subcellularLocation>
</comment>
<comment type="domain">
    <text evidence="1">The last Arg residue of the ACP-binding site is essential for the weak association between ACP/AcpP and FabH.</text>
</comment>
<comment type="similarity">
    <text evidence="1 2">Belongs to the thiolase-like superfamily. FabH family.</text>
</comment>
<accession>P0A3C6</accession>
<accession>Q93NA1</accession>
<accession>Q9FBC7</accession>
<protein>
    <recommendedName>
        <fullName evidence="1">Beta-ketoacyl-[acyl-carrier-protein] synthase III</fullName>
        <shortName evidence="1">Beta-ketoacyl-ACP synthase III</shortName>
        <shortName evidence="1">KAS III</shortName>
        <ecNumber evidence="1">2.3.1.180</ecNumber>
    </recommendedName>
    <alternativeName>
        <fullName evidence="1">3-oxoacyl-[acyl-carrier-protein] synthase 3</fullName>
    </alternativeName>
    <alternativeName>
        <fullName evidence="1">3-oxoacyl-[acyl-carrier-protein] synthase III</fullName>
    </alternativeName>
    <alternativeName>
        <fullName>SpFabH</fullName>
    </alternativeName>
</protein>
<sequence>MAFAKISQVAHYVPEQVVTNHDLAQIMDTNDEWISSRTGIRQRHISRTESTSDLATEVAKKLMAKAGITGEELDFIILATITPDSMMPSTAARVQANIGANKAFAFDLTAACSGFVFALSTAEKFIASGRFQKGLVIGSETLSKAVDWSDRSTAVLFGDGAGGVLLEASEQEHFLAESLNSDGSRSECLTYGHSGLHSPFSDQESADSFLKMDGRTVFDFAIRDVAKSIKQTIDESPIEVTDLDYLLLHQANDRILDKMARKIGVDRAKLPANMMEYGNTSAASIPILLSECVEQGLIPLDGSQTVLLSGFGGGLTWGTLILTI</sequence>
<reference key="1">
    <citation type="journal article" date="2000" name="Nature">
        <title>A triclosan-resistant bacterial enzyme.</title>
        <authorList>
            <person name="Heath R.J."/>
            <person name="Rock C.O."/>
        </authorList>
    </citation>
    <scope>NUCLEOTIDE SEQUENCE [GENOMIC DNA]</scope>
</reference>
<reference key="2">
    <citation type="journal article" date="2001" name="J. Bacteriol.">
        <title>Genome of the bacterium Streptococcus pneumoniae strain R6.</title>
        <authorList>
            <person name="Hoskins J."/>
            <person name="Alborn W.E. Jr."/>
            <person name="Arnold J."/>
            <person name="Blaszczak L.C."/>
            <person name="Burgett S."/>
            <person name="DeHoff B.S."/>
            <person name="Estrem S.T."/>
            <person name="Fritz L."/>
            <person name="Fu D.-J."/>
            <person name="Fuller W."/>
            <person name="Geringer C."/>
            <person name="Gilmour R."/>
            <person name="Glass J.S."/>
            <person name="Khoja H."/>
            <person name="Kraft A.R."/>
            <person name="Lagace R.E."/>
            <person name="LeBlanc D.J."/>
            <person name="Lee L.N."/>
            <person name="Lefkowitz E.J."/>
            <person name="Lu J."/>
            <person name="Matsushima P."/>
            <person name="McAhren S.M."/>
            <person name="McHenney M."/>
            <person name="McLeaster K."/>
            <person name="Mundy C.W."/>
            <person name="Nicas T.I."/>
            <person name="Norris F.H."/>
            <person name="O'Gara M."/>
            <person name="Peery R.B."/>
            <person name="Robertson G.T."/>
            <person name="Rockey P."/>
            <person name="Sun P.-M."/>
            <person name="Winkler M.E."/>
            <person name="Yang Y."/>
            <person name="Young-Bellido M."/>
            <person name="Zhao G."/>
            <person name="Zook C.A."/>
            <person name="Baltz R.H."/>
            <person name="Jaskunas S.R."/>
            <person name="Rosteck P.R. Jr."/>
            <person name="Skatrud P.L."/>
            <person name="Glass J.I."/>
        </authorList>
    </citation>
    <scope>NUCLEOTIDE SEQUENCE [LARGE SCALE GENOMIC DNA]</scope>
    <source>
        <strain>ATCC BAA-255 / R6</strain>
    </source>
</reference>
<feature type="chain" id="PRO_0000110492" description="Beta-ketoacyl-[acyl-carrier-protein] synthase III">
    <location>
        <begin position="1"/>
        <end position="324"/>
    </location>
</feature>
<feature type="region of interest" description="ACP-binding" evidence="1">
    <location>
        <begin position="250"/>
        <end position="254"/>
    </location>
</feature>
<feature type="active site" evidence="1">
    <location>
        <position position="112"/>
    </location>
</feature>
<feature type="active site" evidence="1">
    <location>
        <position position="249"/>
    </location>
</feature>
<feature type="active site" evidence="1">
    <location>
        <position position="279"/>
    </location>
</feature>
<evidence type="ECO:0000255" key="1">
    <source>
        <dbReference type="HAMAP-Rule" id="MF_01815"/>
    </source>
</evidence>
<evidence type="ECO:0000305" key="2"/>
<proteinExistence type="inferred from homology"/>
<organism>
    <name type="scientific">Streptococcus pneumoniae (strain ATCC BAA-255 / R6)</name>
    <dbReference type="NCBI Taxonomy" id="171101"/>
    <lineage>
        <taxon>Bacteria</taxon>
        <taxon>Bacillati</taxon>
        <taxon>Bacillota</taxon>
        <taxon>Bacilli</taxon>
        <taxon>Lactobacillales</taxon>
        <taxon>Streptococcaceae</taxon>
        <taxon>Streptococcus</taxon>
    </lineage>
</organism>
<name>FABH_STRR6</name>
<gene>
    <name evidence="1" type="primary">fabH</name>
    <name type="ordered locus">spr0377</name>
</gene>
<dbReference type="EC" id="2.3.1.180" evidence="1"/>
<dbReference type="EMBL" id="AF197933">
    <property type="protein sequence ID" value="AAF98271.1"/>
    <property type="molecule type" value="Genomic_DNA"/>
</dbReference>
<dbReference type="EMBL" id="AE007317">
    <property type="protein sequence ID" value="AAK99181.1"/>
    <property type="molecule type" value="Genomic_DNA"/>
</dbReference>
<dbReference type="PIR" id="A97919">
    <property type="entry name" value="A97919"/>
</dbReference>
<dbReference type="RefSeq" id="NP_357971.1">
    <property type="nucleotide sequence ID" value="NC_003098.1"/>
</dbReference>
<dbReference type="RefSeq" id="WP_000852948.1">
    <property type="nucleotide sequence ID" value="NC_003098.1"/>
</dbReference>
<dbReference type="SMR" id="P0A3C6"/>
<dbReference type="STRING" id="171101.spr0377"/>
<dbReference type="KEGG" id="spr:spr0377"/>
<dbReference type="PATRIC" id="fig|171101.6.peg.418"/>
<dbReference type="eggNOG" id="COG0332">
    <property type="taxonomic scope" value="Bacteria"/>
</dbReference>
<dbReference type="HOGENOM" id="CLU_039592_4_1_9"/>
<dbReference type="UniPathway" id="UPA00094"/>
<dbReference type="Proteomes" id="UP000000586">
    <property type="component" value="Chromosome"/>
</dbReference>
<dbReference type="GO" id="GO:0005737">
    <property type="term" value="C:cytoplasm"/>
    <property type="evidence" value="ECO:0007669"/>
    <property type="project" value="UniProtKB-SubCell"/>
</dbReference>
<dbReference type="GO" id="GO:0004315">
    <property type="term" value="F:3-oxoacyl-[acyl-carrier-protein] synthase activity"/>
    <property type="evidence" value="ECO:0007669"/>
    <property type="project" value="InterPro"/>
</dbReference>
<dbReference type="GO" id="GO:0033818">
    <property type="term" value="F:beta-ketoacyl-acyl-carrier-protein synthase III activity"/>
    <property type="evidence" value="ECO:0007669"/>
    <property type="project" value="UniProtKB-UniRule"/>
</dbReference>
<dbReference type="GO" id="GO:0006633">
    <property type="term" value="P:fatty acid biosynthetic process"/>
    <property type="evidence" value="ECO:0007669"/>
    <property type="project" value="UniProtKB-UniRule"/>
</dbReference>
<dbReference type="CDD" id="cd00830">
    <property type="entry name" value="KAS_III"/>
    <property type="match status" value="1"/>
</dbReference>
<dbReference type="Gene3D" id="3.40.47.10">
    <property type="match status" value="1"/>
</dbReference>
<dbReference type="HAMAP" id="MF_01815">
    <property type="entry name" value="FabH"/>
    <property type="match status" value="1"/>
</dbReference>
<dbReference type="InterPro" id="IPR013747">
    <property type="entry name" value="ACP_syn_III_C"/>
</dbReference>
<dbReference type="InterPro" id="IPR013751">
    <property type="entry name" value="ACP_syn_III_N"/>
</dbReference>
<dbReference type="InterPro" id="IPR004655">
    <property type="entry name" value="FabH"/>
</dbReference>
<dbReference type="InterPro" id="IPR016039">
    <property type="entry name" value="Thiolase-like"/>
</dbReference>
<dbReference type="NCBIfam" id="TIGR00747">
    <property type="entry name" value="fabH"/>
    <property type="match status" value="1"/>
</dbReference>
<dbReference type="NCBIfam" id="NF006829">
    <property type="entry name" value="PRK09352.1"/>
    <property type="match status" value="1"/>
</dbReference>
<dbReference type="PANTHER" id="PTHR43091">
    <property type="entry name" value="3-OXOACYL-[ACYL-CARRIER-PROTEIN] SYNTHASE"/>
    <property type="match status" value="1"/>
</dbReference>
<dbReference type="PANTHER" id="PTHR43091:SF1">
    <property type="entry name" value="BETA-KETOACYL-[ACYL-CARRIER-PROTEIN] SYNTHASE III, CHLOROPLASTIC"/>
    <property type="match status" value="1"/>
</dbReference>
<dbReference type="Pfam" id="PF08545">
    <property type="entry name" value="ACP_syn_III"/>
    <property type="match status" value="1"/>
</dbReference>
<dbReference type="Pfam" id="PF08541">
    <property type="entry name" value="ACP_syn_III_C"/>
    <property type="match status" value="1"/>
</dbReference>
<dbReference type="SUPFAM" id="SSF53901">
    <property type="entry name" value="Thiolase-like"/>
    <property type="match status" value="1"/>
</dbReference>
<keyword id="KW-0012">Acyltransferase</keyword>
<keyword id="KW-0963">Cytoplasm</keyword>
<keyword id="KW-0275">Fatty acid biosynthesis</keyword>
<keyword id="KW-0276">Fatty acid metabolism</keyword>
<keyword id="KW-0444">Lipid biosynthesis</keyword>
<keyword id="KW-0443">Lipid metabolism</keyword>
<keyword id="KW-0511">Multifunctional enzyme</keyword>
<keyword id="KW-1185">Reference proteome</keyword>
<keyword id="KW-0808">Transferase</keyword>